<keyword id="KW-1015">Disulfide bond</keyword>
<keyword id="KW-0528">Neurotoxin</keyword>
<keyword id="KW-0873">Pyrrolidone carboxylic acid</keyword>
<keyword id="KW-0964">Secreted</keyword>
<keyword id="KW-0732">Signal</keyword>
<keyword id="KW-0800">Toxin</keyword>
<dbReference type="EMBL" id="AF214994">
    <property type="protein sequence ID" value="AAG60422.1"/>
    <property type="molecule type" value="mRNA"/>
</dbReference>
<dbReference type="ConoServer" id="681">
    <property type="toxin name" value="Vn5.6 precursor"/>
</dbReference>
<dbReference type="GO" id="GO:0005576">
    <property type="term" value="C:extracellular region"/>
    <property type="evidence" value="ECO:0007669"/>
    <property type="project" value="UniProtKB-SubCell"/>
</dbReference>
<dbReference type="GO" id="GO:0008200">
    <property type="term" value="F:ion channel inhibitor activity"/>
    <property type="evidence" value="ECO:0007669"/>
    <property type="project" value="InterPro"/>
</dbReference>
<dbReference type="GO" id="GO:0090729">
    <property type="term" value="F:toxin activity"/>
    <property type="evidence" value="ECO:0007669"/>
    <property type="project" value="UniProtKB-KW"/>
</dbReference>
<dbReference type="InterPro" id="IPR004214">
    <property type="entry name" value="Conotoxin"/>
</dbReference>
<dbReference type="Pfam" id="PF02950">
    <property type="entry name" value="Conotoxin"/>
    <property type="match status" value="1"/>
</dbReference>
<proteinExistence type="inferred from homology"/>
<feature type="signal peptide" evidence="2">
    <location>
        <begin position="1"/>
        <end position="19"/>
    </location>
</feature>
<feature type="propeptide" id="PRO_0000404968" evidence="1">
    <location>
        <begin position="20"/>
        <end position="59"/>
    </location>
</feature>
<feature type="peptide" id="PRO_0000404969" description="Conotoxin Vn5.6">
    <location>
        <begin position="60"/>
        <end position="75"/>
    </location>
</feature>
<feature type="modified residue" description="Pyrrolidone carboxylic acid" evidence="1">
    <location>
        <position position="60"/>
    </location>
</feature>
<reference key="1">
    <citation type="journal article" date="2001" name="Mol. Biol. Evol.">
        <title>Mechanisms for evolving hypervariability: the case of conopeptides.</title>
        <authorList>
            <person name="Conticello S.G."/>
            <person name="Gilad Y."/>
            <person name="Avidan N."/>
            <person name="Ben-Asher E."/>
            <person name="Levy Z."/>
            <person name="Fainzilber M."/>
        </authorList>
    </citation>
    <scope>NUCLEOTIDE SEQUENCE [MRNA]</scope>
    <source>
        <tissue>Venom duct</tissue>
    </source>
</reference>
<sequence>MLCLPVFIILLLLASPAAPNPLEKRIQSDLIRAALEDADMKTGEREILNIIDSISDVAKQICCQITVDCCVLDEE</sequence>
<protein>
    <recommendedName>
        <fullName evidence="3">Conotoxin Vn5.6</fullName>
    </recommendedName>
    <alternativeName>
        <fullName evidence="5">Conotoxin VnMLCL-022</fullName>
    </alternativeName>
</protein>
<name>CT56_CONVE</name>
<comment type="subcellular location">
    <subcellularLocation>
        <location evidence="4">Secreted</location>
    </subcellularLocation>
</comment>
<comment type="tissue specificity">
    <text evidence="4">Expressed by the venom duct.</text>
</comment>
<comment type="domain">
    <text evidence="3">The cysteine framework is V (CC-CC).</text>
</comment>
<comment type="PTM">
    <text evidence="3">Contains 2 disulfide bonds that can be either 'C1-C3, C2-C4' or 'C1-C4, C2-C3', since these disulfide connectivities have been observed for conotoxins with cysteine framework V (for examples, see AC P0DQQ7 and AC P81755).</text>
</comment>
<comment type="similarity">
    <text evidence="3">Belongs to the conotoxin T superfamily.</text>
</comment>
<accession>Q9BPE0</accession>
<evidence type="ECO:0000250" key="1"/>
<evidence type="ECO:0000255" key="2"/>
<evidence type="ECO:0000305" key="3"/>
<evidence type="ECO:0000305" key="4">
    <source>
    </source>
</evidence>
<evidence type="ECO:0000312" key="5">
    <source>
        <dbReference type="EMBL" id="AAG60422.1"/>
    </source>
</evidence>
<organism>
    <name type="scientific">Conus ventricosus</name>
    <name type="common">Mediterranean cone</name>
    <dbReference type="NCBI Taxonomy" id="117992"/>
    <lineage>
        <taxon>Eukaryota</taxon>
        <taxon>Metazoa</taxon>
        <taxon>Spiralia</taxon>
        <taxon>Lophotrochozoa</taxon>
        <taxon>Mollusca</taxon>
        <taxon>Gastropoda</taxon>
        <taxon>Caenogastropoda</taxon>
        <taxon>Neogastropoda</taxon>
        <taxon>Conoidea</taxon>
        <taxon>Conidae</taxon>
        <taxon>Conus</taxon>
        <taxon>Lautoconus</taxon>
    </lineage>
</organism>